<feature type="chain" id="PRO_0000180421" description="Ribonuclease 3">
    <location>
        <begin position="1"/>
        <end position="229"/>
    </location>
</feature>
<feature type="domain" description="RNase III" evidence="1">
    <location>
        <begin position="5"/>
        <end position="127"/>
    </location>
</feature>
<feature type="domain" description="DRBM" evidence="1">
    <location>
        <begin position="154"/>
        <end position="224"/>
    </location>
</feature>
<feature type="active site" evidence="1">
    <location>
        <position position="44"/>
    </location>
</feature>
<feature type="active site" evidence="1">
    <location>
        <position position="116"/>
    </location>
</feature>
<feature type="binding site" evidence="1">
    <location>
        <position position="40"/>
    </location>
    <ligand>
        <name>Mg(2+)</name>
        <dbReference type="ChEBI" id="CHEBI:18420"/>
    </ligand>
</feature>
<feature type="binding site" evidence="1">
    <location>
        <position position="113"/>
    </location>
    <ligand>
        <name>Mg(2+)</name>
        <dbReference type="ChEBI" id="CHEBI:18420"/>
    </ligand>
</feature>
<feature type="binding site" evidence="1">
    <location>
        <position position="116"/>
    </location>
    <ligand>
        <name>Mg(2+)</name>
        <dbReference type="ChEBI" id="CHEBI:18420"/>
    </ligand>
</feature>
<proteinExistence type="inferred from homology"/>
<keyword id="KW-0963">Cytoplasm</keyword>
<keyword id="KW-0255">Endonuclease</keyword>
<keyword id="KW-0378">Hydrolase</keyword>
<keyword id="KW-0460">Magnesium</keyword>
<keyword id="KW-0479">Metal-binding</keyword>
<keyword id="KW-0507">mRNA processing</keyword>
<keyword id="KW-0540">Nuclease</keyword>
<keyword id="KW-1185">Reference proteome</keyword>
<keyword id="KW-0694">RNA-binding</keyword>
<keyword id="KW-0698">rRNA processing</keyword>
<keyword id="KW-0699">rRNA-binding</keyword>
<keyword id="KW-0819">tRNA processing</keyword>
<name>RNC_PSESM</name>
<gene>
    <name evidence="1" type="primary">rnc</name>
    <name type="ordered locus">PSPTO_4217</name>
</gene>
<dbReference type="EC" id="3.1.26.3" evidence="1"/>
<dbReference type="EMBL" id="AE016853">
    <property type="protein sequence ID" value="AAO57673.1"/>
    <property type="molecule type" value="Genomic_DNA"/>
</dbReference>
<dbReference type="RefSeq" id="NP_793978.1">
    <property type="nucleotide sequence ID" value="NC_004578.1"/>
</dbReference>
<dbReference type="RefSeq" id="WP_005620106.1">
    <property type="nucleotide sequence ID" value="NC_004578.1"/>
</dbReference>
<dbReference type="SMR" id="Q87XG1"/>
<dbReference type="STRING" id="223283.PSPTO_4217"/>
<dbReference type="GeneID" id="73736884"/>
<dbReference type="KEGG" id="pst:PSPTO_4217"/>
<dbReference type="PATRIC" id="fig|223283.9.peg.4324"/>
<dbReference type="eggNOG" id="COG0571">
    <property type="taxonomic scope" value="Bacteria"/>
</dbReference>
<dbReference type="HOGENOM" id="CLU_000907_1_1_6"/>
<dbReference type="OrthoDB" id="9805026at2"/>
<dbReference type="PhylomeDB" id="Q87XG1"/>
<dbReference type="Proteomes" id="UP000002515">
    <property type="component" value="Chromosome"/>
</dbReference>
<dbReference type="GO" id="GO:0005737">
    <property type="term" value="C:cytoplasm"/>
    <property type="evidence" value="ECO:0007669"/>
    <property type="project" value="UniProtKB-SubCell"/>
</dbReference>
<dbReference type="GO" id="GO:0003725">
    <property type="term" value="F:double-stranded RNA binding"/>
    <property type="evidence" value="ECO:0007669"/>
    <property type="project" value="TreeGrafter"/>
</dbReference>
<dbReference type="GO" id="GO:0046872">
    <property type="term" value="F:metal ion binding"/>
    <property type="evidence" value="ECO:0007669"/>
    <property type="project" value="UniProtKB-KW"/>
</dbReference>
<dbReference type="GO" id="GO:0004525">
    <property type="term" value="F:ribonuclease III activity"/>
    <property type="evidence" value="ECO:0007669"/>
    <property type="project" value="UniProtKB-UniRule"/>
</dbReference>
<dbReference type="GO" id="GO:0019843">
    <property type="term" value="F:rRNA binding"/>
    <property type="evidence" value="ECO:0007669"/>
    <property type="project" value="UniProtKB-KW"/>
</dbReference>
<dbReference type="GO" id="GO:0006397">
    <property type="term" value="P:mRNA processing"/>
    <property type="evidence" value="ECO:0007669"/>
    <property type="project" value="UniProtKB-UniRule"/>
</dbReference>
<dbReference type="GO" id="GO:0010468">
    <property type="term" value="P:regulation of gene expression"/>
    <property type="evidence" value="ECO:0007669"/>
    <property type="project" value="TreeGrafter"/>
</dbReference>
<dbReference type="GO" id="GO:0006364">
    <property type="term" value="P:rRNA processing"/>
    <property type="evidence" value="ECO:0007669"/>
    <property type="project" value="UniProtKB-UniRule"/>
</dbReference>
<dbReference type="GO" id="GO:0008033">
    <property type="term" value="P:tRNA processing"/>
    <property type="evidence" value="ECO:0007669"/>
    <property type="project" value="UniProtKB-KW"/>
</dbReference>
<dbReference type="CDD" id="cd10845">
    <property type="entry name" value="DSRM_RNAse_III_family"/>
    <property type="match status" value="1"/>
</dbReference>
<dbReference type="CDD" id="cd00593">
    <property type="entry name" value="RIBOc"/>
    <property type="match status" value="1"/>
</dbReference>
<dbReference type="FunFam" id="1.10.1520.10:FF:000001">
    <property type="entry name" value="Ribonuclease 3"/>
    <property type="match status" value="1"/>
</dbReference>
<dbReference type="Gene3D" id="3.30.160.20">
    <property type="match status" value="1"/>
</dbReference>
<dbReference type="Gene3D" id="1.10.1520.10">
    <property type="entry name" value="Ribonuclease III domain"/>
    <property type="match status" value="1"/>
</dbReference>
<dbReference type="HAMAP" id="MF_00104">
    <property type="entry name" value="RNase_III"/>
    <property type="match status" value="1"/>
</dbReference>
<dbReference type="InterPro" id="IPR014720">
    <property type="entry name" value="dsRBD_dom"/>
</dbReference>
<dbReference type="InterPro" id="IPR011907">
    <property type="entry name" value="RNase_III"/>
</dbReference>
<dbReference type="InterPro" id="IPR000999">
    <property type="entry name" value="RNase_III_dom"/>
</dbReference>
<dbReference type="InterPro" id="IPR036389">
    <property type="entry name" value="RNase_III_sf"/>
</dbReference>
<dbReference type="NCBIfam" id="TIGR02191">
    <property type="entry name" value="RNaseIII"/>
    <property type="match status" value="1"/>
</dbReference>
<dbReference type="PANTHER" id="PTHR11207:SF0">
    <property type="entry name" value="RIBONUCLEASE 3"/>
    <property type="match status" value="1"/>
</dbReference>
<dbReference type="PANTHER" id="PTHR11207">
    <property type="entry name" value="RIBONUCLEASE III"/>
    <property type="match status" value="1"/>
</dbReference>
<dbReference type="Pfam" id="PF00035">
    <property type="entry name" value="dsrm"/>
    <property type="match status" value="1"/>
</dbReference>
<dbReference type="Pfam" id="PF14622">
    <property type="entry name" value="Ribonucleas_3_3"/>
    <property type="match status" value="1"/>
</dbReference>
<dbReference type="SMART" id="SM00358">
    <property type="entry name" value="DSRM"/>
    <property type="match status" value="1"/>
</dbReference>
<dbReference type="SMART" id="SM00535">
    <property type="entry name" value="RIBOc"/>
    <property type="match status" value="1"/>
</dbReference>
<dbReference type="SUPFAM" id="SSF54768">
    <property type="entry name" value="dsRNA-binding domain-like"/>
    <property type="match status" value="1"/>
</dbReference>
<dbReference type="SUPFAM" id="SSF69065">
    <property type="entry name" value="RNase III domain-like"/>
    <property type="match status" value="1"/>
</dbReference>
<dbReference type="PROSITE" id="PS50137">
    <property type="entry name" value="DS_RBD"/>
    <property type="match status" value="1"/>
</dbReference>
<dbReference type="PROSITE" id="PS00517">
    <property type="entry name" value="RNASE_3_1"/>
    <property type="match status" value="1"/>
</dbReference>
<dbReference type="PROSITE" id="PS50142">
    <property type="entry name" value="RNASE_3_2"/>
    <property type="match status" value="1"/>
</dbReference>
<accession>Q87XG1</accession>
<organism>
    <name type="scientific">Pseudomonas syringae pv. tomato (strain ATCC BAA-871 / DC3000)</name>
    <dbReference type="NCBI Taxonomy" id="223283"/>
    <lineage>
        <taxon>Bacteria</taxon>
        <taxon>Pseudomonadati</taxon>
        <taxon>Pseudomonadota</taxon>
        <taxon>Gammaproteobacteria</taxon>
        <taxon>Pseudomonadales</taxon>
        <taxon>Pseudomonadaceae</taxon>
        <taxon>Pseudomonas</taxon>
    </lineage>
</organism>
<evidence type="ECO:0000255" key="1">
    <source>
        <dbReference type="HAMAP-Rule" id="MF_00104"/>
    </source>
</evidence>
<reference key="1">
    <citation type="journal article" date="2003" name="Proc. Natl. Acad. Sci. U.S.A.">
        <title>The complete genome sequence of the Arabidopsis and tomato pathogen Pseudomonas syringae pv. tomato DC3000.</title>
        <authorList>
            <person name="Buell C.R."/>
            <person name="Joardar V."/>
            <person name="Lindeberg M."/>
            <person name="Selengut J."/>
            <person name="Paulsen I.T."/>
            <person name="Gwinn M.L."/>
            <person name="Dodson R.J."/>
            <person name="DeBoy R.T."/>
            <person name="Durkin A.S."/>
            <person name="Kolonay J.F."/>
            <person name="Madupu R."/>
            <person name="Daugherty S.C."/>
            <person name="Brinkac L.M."/>
            <person name="Beanan M.J."/>
            <person name="Haft D.H."/>
            <person name="Nelson W.C."/>
            <person name="Davidsen T.M."/>
            <person name="Zafar N."/>
            <person name="Zhou L."/>
            <person name="Liu J."/>
            <person name="Yuan Q."/>
            <person name="Khouri H.M."/>
            <person name="Fedorova N.B."/>
            <person name="Tran B."/>
            <person name="Russell D."/>
            <person name="Berry K.J."/>
            <person name="Utterback T.R."/>
            <person name="Van Aken S.E."/>
            <person name="Feldblyum T.V."/>
            <person name="D'Ascenzo M."/>
            <person name="Deng W.-L."/>
            <person name="Ramos A.R."/>
            <person name="Alfano J.R."/>
            <person name="Cartinhour S."/>
            <person name="Chatterjee A.K."/>
            <person name="Delaney T.P."/>
            <person name="Lazarowitz S.G."/>
            <person name="Martin G.B."/>
            <person name="Schneider D.J."/>
            <person name="Tang X."/>
            <person name="Bender C.L."/>
            <person name="White O."/>
            <person name="Fraser C.M."/>
            <person name="Collmer A."/>
        </authorList>
    </citation>
    <scope>NUCLEOTIDE SEQUENCE [LARGE SCALE GENOMIC DNA]</scope>
    <source>
        <strain>ATCC BAA-871 / DC3000</strain>
    </source>
</reference>
<protein>
    <recommendedName>
        <fullName evidence="1">Ribonuclease 3</fullName>
        <ecNumber evidence="1">3.1.26.3</ecNumber>
    </recommendedName>
    <alternativeName>
        <fullName evidence="1">Ribonuclease III</fullName>
        <shortName evidence="1">RNase III</shortName>
    </alternativeName>
</protein>
<comment type="function">
    <text evidence="1">Digests double-stranded RNA. Involved in the processing of primary rRNA transcript to yield the immediate precursors to the large and small rRNAs (23S and 16S). Processes some mRNAs, and tRNAs when they are encoded in the rRNA operon. Processes pre-crRNA and tracrRNA of type II CRISPR loci if present in the organism.</text>
</comment>
<comment type="catalytic activity">
    <reaction evidence="1">
        <text>Endonucleolytic cleavage to 5'-phosphomonoester.</text>
        <dbReference type="EC" id="3.1.26.3"/>
    </reaction>
</comment>
<comment type="cofactor">
    <cofactor evidence="1">
        <name>Mg(2+)</name>
        <dbReference type="ChEBI" id="CHEBI:18420"/>
    </cofactor>
</comment>
<comment type="subunit">
    <text evidence="1">Homodimer.</text>
</comment>
<comment type="subcellular location">
    <subcellularLocation>
        <location evidence="1">Cytoplasm</location>
    </subcellularLocation>
</comment>
<comment type="similarity">
    <text evidence="1">Belongs to the ribonuclease III family.</text>
</comment>
<sequence length="229" mass="25574">MSVSLSRLERQLGYTFKDQELMILALTHRSFAGRNNERLEFLGDAILNFVAGEALFERFPQAREGQLSRLRARLVKGETLALLARGFDLGEYLRLGSGELKSGGFRRESILADALEALIGAIYLDAGMEAARERVLAWLTTEFDSLTLVDTNKDPKTRLQEFLQSRACDLPRYEVVDIQGEPHCRTFFVECEINLLNEKSRGQGVSRRIAEQVAAAAALIALGVENGHE</sequence>